<feature type="chain" id="PRO_0000357894" description="NADH-quinone oxidoreductase subunit D 1">
    <location>
        <begin position="1"/>
        <end position="396"/>
    </location>
</feature>
<dbReference type="EC" id="7.1.1.-" evidence="1"/>
<dbReference type="EMBL" id="CP001074">
    <property type="protein sequence ID" value="ACE90652.1"/>
    <property type="molecule type" value="Genomic_DNA"/>
</dbReference>
<dbReference type="SMR" id="B3PW00"/>
<dbReference type="KEGG" id="rec:RHECIAT_CH0001678"/>
<dbReference type="eggNOG" id="COG0649">
    <property type="taxonomic scope" value="Bacteria"/>
</dbReference>
<dbReference type="HOGENOM" id="CLU_015134_1_1_5"/>
<dbReference type="Proteomes" id="UP000008817">
    <property type="component" value="Chromosome"/>
</dbReference>
<dbReference type="GO" id="GO:0005886">
    <property type="term" value="C:plasma membrane"/>
    <property type="evidence" value="ECO:0007669"/>
    <property type="project" value="UniProtKB-SubCell"/>
</dbReference>
<dbReference type="GO" id="GO:0051287">
    <property type="term" value="F:NAD binding"/>
    <property type="evidence" value="ECO:0007669"/>
    <property type="project" value="InterPro"/>
</dbReference>
<dbReference type="GO" id="GO:0050136">
    <property type="term" value="F:NADH:ubiquinone reductase (non-electrogenic) activity"/>
    <property type="evidence" value="ECO:0007669"/>
    <property type="project" value="UniProtKB-UniRule"/>
</dbReference>
<dbReference type="GO" id="GO:0048038">
    <property type="term" value="F:quinone binding"/>
    <property type="evidence" value="ECO:0007669"/>
    <property type="project" value="UniProtKB-KW"/>
</dbReference>
<dbReference type="FunFam" id="1.10.645.10:FF:000005">
    <property type="entry name" value="NADH-quinone oxidoreductase subunit D"/>
    <property type="match status" value="1"/>
</dbReference>
<dbReference type="Gene3D" id="1.10.645.10">
    <property type="entry name" value="Cytochrome-c3 Hydrogenase, chain B"/>
    <property type="match status" value="1"/>
</dbReference>
<dbReference type="HAMAP" id="MF_01358">
    <property type="entry name" value="NDH1_NuoD"/>
    <property type="match status" value="1"/>
</dbReference>
<dbReference type="InterPro" id="IPR001135">
    <property type="entry name" value="NADH_Q_OxRdtase_suD"/>
</dbReference>
<dbReference type="InterPro" id="IPR014029">
    <property type="entry name" value="NADH_UbQ_OxRdtase_49kDa_CS"/>
</dbReference>
<dbReference type="InterPro" id="IPR022885">
    <property type="entry name" value="NDH1_su_D/H"/>
</dbReference>
<dbReference type="InterPro" id="IPR029014">
    <property type="entry name" value="NiFe-Hase_large"/>
</dbReference>
<dbReference type="NCBIfam" id="TIGR01962">
    <property type="entry name" value="NuoD"/>
    <property type="match status" value="1"/>
</dbReference>
<dbReference type="NCBIfam" id="NF004739">
    <property type="entry name" value="PRK06075.1"/>
    <property type="match status" value="1"/>
</dbReference>
<dbReference type="PANTHER" id="PTHR11993:SF10">
    <property type="entry name" value="NADH DEHYDROGENASE [UBIQUINONE] IRON-SULFUR PROTEIN 2, MITOCHONDRIAL"/>
    <property type="match status" value="1"/>
</dbReference>
<dbReference type="PANTHER" id="PTHR11993">
    <property type="entry name" value="NADH-UBIQUINONE OXIDOREDUCTASE 49 KDA SUBUNIT"/>
    <property type="match status" value="1"/>
</dbReference>
<dbReference type="Pfam" id="PF00346">
    <property type="entry name" value="Complex1_49kDa"/>
    <property type="match status" value="1"/>
</dbReference>
<dbReference type="SUPFAM" id="SSF56762">
    <property type="entry name" value="HydB/Nqo4-like"/>
    <property type="match status" value="1"/>
</dbReference>
<dbReference type="PROSITE" id="PS00535">
    <property type="entry name" value="COMPLEX1_49K"/>
    <property type="match status" value="1"/>
</dbReference>
<protein>
    <recommendedName>
        <fullName evidence="1">NADH-quinone oxidoreductase subunit D 1</fullName>
        <ecNumber evidence="1">7.1.1.-</ecNumber>
    </recommendedName>
    <alternativeName>
        <fullName evidence="1">NADH dehydrogenase I subunit D 1</fullName>
    </alternativeName>
    <alternativeName>
        <fullName evidence="1">NDH-1 subunit D 1</fullName>
    </alternativeName>
</protein>
<sequence length="396" mass="44755">MTEHNVRNFNINFGPQHPAAHGVLRLVLELDGEIVERVDPHIGLLHRGTEKLIETKTYLQAVPYFDRLDYVAPMNQEHAYALAVERLLGIEIPIRGQLIRVLYSEIGRILSHLLNVTTQAMDVGALTPPLWGFEEREKLMVFYERASGSRMHAAYIRPGGVHQDLPEKLVQDIGDWCDPFLKALDDIDNLLTGNRIFKQRNVDIGVVSLEDCWAWGFSGVMVRGSGAAWDLRRAQPYECYSDLEFDIPIGKNGDNYDRYLIRMIEMRQSVRIMKQCVNRLLSDAKTGPFSSIDGKVVPPKRGEMKRSMEALIHHFKLYTEGYHVPAGEVYAAVEAPKGEFGVYLVSDGSNKPYRCKIRAPGYAHLQAMDFMCRGHQLADVAAVLGSLDIVFGEVDR</sequence>
<evidence type="ECO:0000255" key="1">
    <source>
        <dbReference type="HAMAP-Rule" id="MF_01358"/>
    </source>
</evidence>
<comment type="function">
    <text evidence="1">NDH-1 shuttles electrons from NADH, via FMN and iron-sulfur (Fe-S) centers, to quinones in the respiratory chain. The immediate electron acceptor for the enzyme in this species is believed to be ubiquinone. Couples the redox reaction to proton translocation (for every two electrons transferred, four hydrogen ions are translocated across the cytoplasmic membrane), and thus conserves the redox energy in a proton gradient.</text>
</comment>
<comment type="catalytic activity">
    <reaction evidence="1">
        <text>a quinone + NADH + 5 H(+)(in) = a quinol + NAD(+) + 4 H(+)(out)</text>
        <dbReference type="Rhea" id="RHEA:57888"/>
        <dbReference type="ChEBI" id="CHEBI:15378"/>
        <dbReference type="ChEBI" id="CHEBI:24646"/>
        <dbReference type="ChEBI" id="CHEBI:57540"/>
        <dbReference type="ChEBI" id="CHEBI:57945"/>
        <dbReference type="ChEBI" id="CHEBI:132124"/>
    </reaction>
</comment>
<comment type="subunit">
    <text evidence="1">NDH-1 is composed of 14 different subunits. Subunits NuoB, C, D, E, F, and G constitute the peripheral sector of the complex.</text>
</comment>
<comment type="subcellular location">
    <subcellularLocation>
        <location evidence="1">Cell inner membrane</location>
        <topology evidence="1">Peripheral membrane protein</topology>
        <orientation evidence="1">Cytoplasmic side</orientation>
    </subcellularLocation>
</comment>
<comment type="similarity">
    <text evidence="1">Belongs to the complex I 49 kDa subunit family.</text>
</comment>
<proteinExistence type="inferred from homology"/>
<name>NUOD1_RHIE6</name>
<keyword id="KW-0997">Cell inner membrane</keyword>
<keyword id="KW-1003">Cell membrane</keyword>
<keyword id="KW-0472">Membrane</keyword>
<keyword id="KW-0520">NAD</keyword>
<keyword id="KW-0874">Quinone</keyword>
<keyword id="KW-1278">Translocase</keyword>
<keyword id="KW-0813">Transport</keyword>
<keyword id="KW-0830">Ubiquinone</keyword>
<accession>B3PW00</accession>
<organism>
    <name type="scientific">Rhizobium etli (strain CIAT 652)</name>
    <dbReference type="NCBI Taxonomy" id="491916"/>
    <lineage>
        <taxon>Bacteria</taxon>
        <taxon>Pseudomonadati</taxon>
        <taxon>Pseudomonadota</taxon>
        <taxon>Alphaproteobacteria</taxon>
        <taxon>Hyphomicrobiales</taxon>
        <taxon>Rhizobiaceae</taxon>
        <taxon>Rhizobium/Agrobacterium group</taxon>
        <taxon>Rhizobium</taxon>
    </lineage>
</organism>
<gene>
    <name evidence="1" type="primary">nuoD1</name>
    <name type="ordered locus">RHECIAT_CH0001678</name>
</gene>
<reference key="1">
    <citation type="journal article" date="2010" name="Appl. Environ. Microbiol.">
        <title>Conserved symbiotic plasmid DNA sequences in the multireplicon pangenomic structure of Rhizobium etli.</title>
        <authorList>
            <person name="Gonzalez V."/>
            <person name="Acosta J.L."/>
            <person name="Santamaria R.I."/>
            <person name="Bustos P."/>
            <person name="Fernandez J.L."/>
            <person name="Hernandez Gonzalez I.L."/>
            <person name="Diaz R."/>
            <person name="Flores M."/>
            <person name="Palacios R."/>
            <person name="Mora J."/>
            <person name="Davila G."/>
        </authorList>
    </citation>
    <scope>NUCLEOTIDE SEQUENCE [LARGE SCALE GENOMIC DNA]</scope>
    <source>
        <strain>CIAT 652</strain>
    </source>
</reference>